<comment type="function">
    <text evidence="1">Catalyzes the attachment of proline to tRNA(Pro) in a two-step reaction: proline is first activated by ATP to form Pro-AMP and then transferred to the acceptor end of tRNA(Pro).</text>
</comment>
<comment type="catalytic activity">
    <reaction evidence="1">
        <text>tRNA(Pro) + L-proline + ATP = L-prolyl-tRNA(Pro) + AMP + diphosphate</text>
        <dbReference type="Rhea" id="RHEA:14305"/>
        <dbReference type="Rhea" id="RHEA-COMP:9700"/>
        <dbReference type="Rhea" id="RHEA-COMP:9702"/>
        <dbReference type="ChEBI" id="CHEBI:30616"/>
        <dbReference type="ChEBI" id="CHEBI:33019"/>
        <dbReference type="ChEBI" id="CHEBI:60039"/>
        <dbReference type="ChEBI" id="CHEBI:78442"/>
        <dbReference type="ChEBI" id="CHEBI:78532"/>
        <dbReference type="ChEBI" id="CHEBI:456215"/>
        <dbReference type="EC" id="6.1.1.15"/>
    </reaction>
</comment>
<comment type="subunit">
    <text evidence="1">Homodimer.</text>
</comment>
<comment type="subcellular location">
    <subcellularLocation>
        <location evidence="1">Cytoplasm</location>
    </subcellularLocation>
</comment>
<comment type="domain">
    <text evidence="1">Consists of three domains: the N-terminal catalytic domain, the anticodon-binding domain and the C-terminal extension.</text>
</comment>
<comment type="similarity">
    <text evidence="1">Belongs to the class-II aminoacyl-tRNA synthetase family. ProS type 3 subfamily.</text>
</comment>
<sequence>MAEKITSRAQDYSQWYIDIVRFAKLADYSDVRGCMVIRPNGYAIWEKMQAALDRMFKETGHVNAYFPLFIPESFIQKEAEHIEGFAPECAVVTHGGGEELQEKLYVRPTSETIIWSSYKKWIQSYRDLPILINQWANVVRWEMRTRLFLRTTEFLWQEGHTAHATETEAKEEVLRMIEVYRHFAEEYMAIPVIVGMKTESEKFAGAHETFCIEAMMQDGKALQAGTSHHLGQNFAKAFDCKFQTKDGSLEYVWASSWGVSTRLIGALIMAHSDDKGLVLPPKLASRQAVIVPILKGDKAAVLEKAVELEKMLKAAGVQVFLDDSEQNTPGWKFAEYELQGIPVRIELGPRDVAAGKCVVARRDTSEKETLEIDTAFPQKIKDLLDSIQTGLFERALRFREEKTKVVTTYEELKAQVEVGFAVAHWDGTPETEAKIKEETKATIRCLPVSKDFATKYGINTEGKCVFSGNPSKQMVVFAKAY</sequence>
<feature type="chain" id="PRO_1000215554" description="Proline--tRNA ligase">
    <location>
        <begin position="1"/>
        <end position="481"/>
    </location>
</feature>
<accession>B3QYP1</accession>
<dbReference type="EC" id="6.1.1.15" evidence="1"/>
<dbReference type="EMBL" id="CP001100">
    <property type="protein sequence ID" value="ACF15114.1"/>
    <property type="molecule type" value="Genomic_DNA"/>
</dbReference>
<dbReference type="RefSeq" id="WP_012501196.1">
    <property type="nucleotide sequence ID" value="NC_011026.1"/>
</dbReference>
<dbReference type="SMR" id="B3QYP1"/>
<dbReference type="STRING" id="517418.Ctha_2665"/>
<dbReference type="KEGG" id="cts:Ctha_2665"/>
<dbReference type="eggNOG" id="COG0442">
    <property type="taxonomic scope" value="Bacteria"/>
</dbReference>
<dbReference type="HOGENOM" id="CLU_001882_4_2_10"/>
<dbReference type="OrthoDB" id="9809052at2"/>
<dbReference type="Proteomes" id="UP000001208">
    <property type="component" value="Chromosome"/>
</dbReference>
<dbReference type="GO" id="GO:0017101">
    <property type="term" value="C:aminoacyl-tRNA synthetase multienzyme complex"/>
    <property type="evidence" value="ECO:0007669"/>
    <property type="project" value="TreeGrafter"/>
</dbReference>
<dbReference type="GO" id="GO:0005737">
    <property type="term" value="C:cytoplasm"/>
    <property type="evidence" value="ECO:0007669"/>
    <property type="project" value="UniProtKB-SubCell"/>
</dbReference>
<dbReference type="GO" id="GO:0005524">
    <property type="term" value="F:ATP binding"/>
    <property type="evidence" value="ECO:0007669"/>
    <property type="project" value="UniProtKB-UniRule"/>
</dbReference>
<dbReference type="GO" id="GO:0004827">
    <property type="term" value="F:proline-tRNA ligase activity"/>
    <property type="evidence" value="ECO:0007669"/>
    <property type="project" value="UniProtKB-UniRule"/>
</dbReference>
<dbReference type="GO" id="GO:0006433">
    <property type="term" value="P:prolyl-tRNA aminoacylation"/>
    <property type="evidence" value="ECO:0007669"/>
    <property type="project" value="UniProtKB-UniRule"/>
</dbReference>
<dbReference type="CDD" id="cd00862">
    <property type="entry name" value="ProRS_anticodon_zinc"/>
    <property type="match status" value="1"/>
</dbReference>
<dbReference type="CDD" id="cd00778">
    <property type="entry name" value="ProRS_core_arch_euk"/>
    <property type="match status" value="1"/>
</dbReference>
<dbReference type="FunFam" id="3.30.930.10:FF:000023">
    <property type="entry name" value="Proline--tRNA ligase"/>
    <property type="match status" value="1"/>
</dbReference>
<dbReference type="Gene3D" id="3.40.50.800">
    <property type="entry name" value="Anticodon-binding domain"/>
    <property type="match status" value="1"/>
</dbReference>
<dbReference type="Gene3D" id="3.30.930.10">
    <property type="entry name" value="Bira Bifunctional Protein, Domain 2"/>
    <property type="match status" value="1"/>
</dbReference>
<dbReference type="Gene3D" id="3.30.110.30">
    <property type="entry name" value="C-terminal domain of ProRS"/>
    <property type="match status" value="1"/>
</dbReference>
<dbReference type="HAMAP" id="MF_01571">
    <property type="entry name" value="Pro_tRNA_synth_type3"/>
    <property type="match status" value="1"/>
</dbReference>
<dbReference type="InterPro" id="IPR002314">
    <property type="entry name" value="aa-tRNA-synt_IIb"/>
</dbReference>
<dbReference type="InterPro" id="IPR006195">
    <property type="entry name" value="aa-tRNA-synth_II"/>
</dbReference>
<dbReference type="InterPro" id="IPR045864">
    <property type="entry name" value="aa-tRNA-synth_II/BPL/LPL"/>
</dbReference>
<dbReference type="InterPro" id="IPR004154">
    <property type="entry name" value="Anticodon-bd"/>
</dbReference>
<dbReference type="InterPro" id="IPR036621">
    <property type="entry name" value="Anticodon-bd_dom_sf"/>
</dbReference>
<dbReference type="InterPro" id="IPR002316">
    <property type="entry name" value="Pro-tRNA-ligase_IIa"/>
</dbReference>
<dbReference type="InterPro" id="IPR004499">
    <property type="entry name" value="Pro-tRNA-ligase_IIa_arc-type"/>
</dbReference>
<dbReference type="InterPro" id="IPR016061">
    <property type="entry name" value="Pro-tRNA_ligase_II_C"/>
</dbReference>
<dbReference type="InterPro" id="IPR017449">
    <property type="entry name" value="Pro-tRNA_synth_II"/>
</dbReference>
<dbReference type="InterPro" id="IPR033721">
    <property type="entry name" value="ProRS_core_arch_euk"/>
</dbReference>
<dbReference type="NCBIfam" id="TIGR00408">
    <property type="entry name" value="proS_fam_I"/>
    <property type="match status" value="1"/>
</dbReference>
<dbReference type="PANTHER" id="PTHR43382:SF2">
    <property type="entry name" value="BIFUNCTIONAL GLUTAMATE_PROLINE--TRNA LIGASE"/>
    <property type="match status" value="1"/>
</dbReference>
<dbReference type="PANTHER" id="PTHR43382">
    <property type="entry name" value="PROLYL-TRNA SYNTHETASE"/>
    <property type="match status" value="1"/>
</dbReference>
<dbReference type="Pfam" id="PF03129">
    <property type="entry name" value="HGTP_anticodon"/>
    <property type="match status" value="1"/>
</dbReference>
<dbReference type="Pfam" id="PF09180">
    <property type="entry name" value="ProRS-C_1"/>
    <property type="match status" value="1"/>
</dbReference>
<dbReference type="Pfam" id="PF00587">
    <property type="entry name" value="tRNA-synt_2b"/>
    <property type="match status" value="1"/>
</dbReference>
<dbReference type="PRINTS" id="PR01046">
    <property type="entry name" value="TRNASYNTHPRO"/>
</dbReference>
<dbReference type="SMART" id="SM00946">
    <property type="entry name" value="ProRS-C_1"/>
    <property type="match status" value="1"/>
</dbReference>
<dbReference type="SUPFAM" id="SSF64586">
    <property type="entry name" value="C-terminal domain of ProRS"/>
    <property type="match status" value="1"/>
</dbReference>
<dbReference type="SUPFAM" id="SSF52954">
    <property type="entry name" value="Class II aaRS ABD-related"/>
    <property type="match status" value="1"/>
</dbReference>
<dbReference type="SUPFAM" id="SSF55681">
    <property type="entry name" value="Class II aaRS and biotin synthetases"/>
    <property type="match status" value="1"/>
</dbReference>
<dbReference type="PROSITE" id="PS50862">
    <property type="entry name" value="AA_TRNA_LIGASE_II"/>
    <property type="match status" value="1"/>
</dbReference>
<keyword id="KW-0030">Aminoacyl-tRNA synthetase</keyword>
<keyword id="KW-0067">ATP-binding</keyword>
<keyword id="KW-0963">Cytoplasm</keyword>
<keyword id="KW-0436">Ligase</keyword>
<keyword id="KW-0547">Nucleotide-binding</keyword>
<keyword id="KW-0648">Protein biosynthesis</keyword>
<keyword id="KW-1185">Reference proteome</keyword>
<reference key="1">
    <citation type="submission" date="2008-06" db="EMBL/GenBank/DDBJ databases">
        <title>Complete sequence of Chloroherpeton thalassium ATCC 35110.</title>
        <authorList>
            <consortium name="US DOE Joint Genome Institute"/>
            <person name="Lucas S."/>
            <person name="Copeland A."/>
            <person name="Lapidus A."/>
            <person name="Glavina del Rio T."/>
            <person name="Dalin E."/>
            <person name="Tice H."/>
            <person name="Bruce D."/>
            <person name="Goodwin L."/>
            <person name="Pitluck S."/>
            <person name="Schmutz J."/>
            <person name="Larimer F."/>
            <person name="Land M."/>
            <person name="Hauser L."/>
            <person name="Kyrpides N."/>
            <person name="Mikhailova N."/>
            <person name="Liu Z."/>
            <person name="Li T."/>
            <person name="Zhao F."/>
            <person name="Overmann J."/>
            <person name="Bryant D.A."/>
            <person name="Richardson P."/>
        </authorList>
    </citation>
    <scope>NUCLEOTIDE SEQUENCE [LARGE SCALE GENOMIC DNA]</scope>
    <source>
        <strain>ATCC 35110 / GB-78</strain>
    </source>
</reference>
<organism>
    <name type="scientific">Chloroherpeton thalassium (strain ATCC 35110 / GB-78)</name>
    <dbReference type="NCBI Taxonomy" id="517418"/>
    <lineage>
        <taxon>Bacteria</taxon>
        <taxon>Pseudomonadati</taxon>
        <taxon>Chlorobiota</taxon>
        <taxon>Chlorobiia</taxon>
        <taxon>Chlorobiales</taxon>
        <taxon>Chloroherpetonaceae</taxon>
        <taxon>Chloroherpeton</taxon>
    </lineage>
</organism>
<name>SYP_CHLT3</name>
<gene>
    <name evidence="1" type="primary">proS</name>
    <name type="ordered locus">Ctha_2665</name>
</gene>
<evidence type="ECO:0000255" key="1">
    <source>
        <dbReference type="HAMAP-Rule" id="MF_01571"/>
    </source>
</evidence>
<protein>
    <recommendedName>
        <fullName evidence="1">Proline--tRNA ligase</fullName>
        <ecNumber evidence="1">6.1.1.15</ecNumber>
    </recommendedName>
    <alternativeName>
        <fullName evidence="1">Prolyl-tRNA synthetase</fullName>
        <shortName evidence="1">ProRS</shortName>
    </alternativeName>
</protein>
<proteinExistence type="inferred from homology"/>